<organism>
    <name type="scientific">Chromohalobacter salexigens (strain ATCC BAA-138 / DSM 3043 / CIP 106854 / NCIMB 13768 / 1H11)</name>
    <dbReference type="NCBI Taxonomy" id="290398"/>
    <lineage>
        <taxon>Bacteria</taxon>
        <taxon>Pseudomonadati</taxon>
        <taxon>Pseudomonadota</taxon>
        <taxon>Gammaproteobacteria</taxon>
        <taxon>Oceanospirillales</taxon>
        <taxon>Halomonadaceae</taxon>
        <taxon>Chromohalobacter</taxon>
    </lineage>
</organism>
<keyword id="KW-0418">Kinase</keyword>
<keyword id="KW-0547">Nucleotide-binding</keyword>
<keyword id="KW-1185">Reference proteome</keyword>
<keyword id="KW-0723">Serine/threonine-protein kinase</keyword>
<keyword id="KW-0808">Transferase</keyword>
<reference key="1">
    <citation type="journal article" date="2011" name="Stand. Genomic Sci.">
        <title>Complete genome sequence of the halophilic and highly halotolerant Chromohalobacter salexigens type strain (1H11(T)).</title>
        <authorList>
            <person name="Copeland A."/>
            <person name="O'Connor K."/>
            <person name="Lucas S."/>
            <person name="Lapidus A."/>
            <person name="Berry K.W."/>
            <person name="Detter J.C."/>
            <person name="Del Rio T.G."/>
            <person name="Hammon N."/>
            <person name="Dalin E."/>
            <person name="Tice H."/>
            <person name="Pitluck S."/>
            <person name="Bruce D."/>
            <person name="Goodwin L."/>
            <person name="Han C."/>
            <person name="Tapia R."/>
            <person name="Saunders E."/>
            <person name="Schmutz J."/>
            <person name="Brettin T."/>
            <person name="Larimer F."/>
            <person name="Land M."/>
            <person name="Hauser L."/>
            <person name="Vargas C."/>
            <person name="Nieto J.J."/>
            <person name="Kyrpides N.C."/>
            <person name="Ivanova N."/>
            <person name="Goker M."/>
            <person name="Klenk H.P."/>
            <person name="Csonka L.N."/>
            <person name="Woyke T."/>
        </authorList>
    </citation>
    <scope>NUCLEOTIDE SEQUENCE [LARGE SCALE GENOMIC DNA]</scope>
    <source>
        <strain>ATCC BAA-138 / DSM 3043 / CIP 106854 / NCIMB 13768 / 1H11</strain>
    </source>
</reference>
<name>PSRP_CHRSD</name>
<comment type="function">
    <text evidence="1">Bifunctional serine/threonine kinase and phosphorylase involved in the regulation of the phosphoenolpyruvate synthase (PEPS) by catalyzing its phosphorylation/dephosphorylation.</text>
</comment>
<comment type="catalytic activity">
    <reaction evidence="1">
        <text>[pyruvate, water dikinase] + ADP = [pyruvate, water dikinase]-phosphate + AMP + H(+)</text>
        <dbReference type="Rhea" id="RHEA:46020"/>
        <dbReference type="Rhea" id="RHEA-COMP:11425"/>
        <dbReference type="Rhea" id="RHEA-COMP:11426"/>
        <dbReference type="ChEBI" id="CHEBI:15378"/>
        <dbReference type="ChEBI" id="CHEBI:43176"/>
        <dbReference type="ChEBI" id="CHEBI:68546"/>
        <dbReference type="ChEBI" id="CHEBI:456215"/>
        <dbReference type="ChEBI" id="CHEBI:456216"/>
        <dbReference type="EC" id="2.7.11.33"/>
    </reaction>
</comment>
<comment type="catalytic activity">
    <reaction evidence="1">
        <text>[pyruvate, water dikinase]-phosphate + phosphate + H(+) = [pyruvate, water dikinase] + diphosphate</text>
        <dbReference type="Rhea" id="RHEA:48580"/>
        <dbReference type="Rhea" id="RHEA-COMP:11425"/>
        <dbReference type="Rhea" id="RHEA-COMP:11426"/>
        <dbReference type="ChEBI" id="CHEBI:15378"/>
        <dbReference type="ChEBI" id="CHEBI:33019"/>
        <dbReference type="ChEBI" id="CHEBI:43176"/>
        <dbReference type="ChEBI" id="CHEBI:43474"/>
        <dbReference type="ChEBI" id="CHEBI:68546"/>
        <dbReference type="EC" id="2.7.4.28"/>
    </reaction>
</comment>
<comment type="similarity">
    <text evidence="1">Belongs to the pyruvate, phosphate/water dikinase regulatory protein family. PSRP subfamily.</text>
</comment>
<protein>
    <recommendedName>
        <fullName evidence="1">Putative phosphoenolpyruvate synthase regulatory protein</fullName>
        <shortName evidence="1">PEP synthase regulatory protein</shortName>
        <shortName evidence="1">PSRP</shortName>
        <ecNumber evidence="1">2.7.11.33</ecNumber>
        <ecNumber evidence="1">2.7.4.28</ecNumber>
    </recommendedName>
    <alternativeName>
        <fullName evidence="1">Pyruvate, water dikinase regulatory protein</fullName>
    </alternativeName>
</protein>
<proteinExistence type="inferred from homology"/>
<dbReference type="EC" id="2.7.11.33" evidence="1"/>
<dbReference type="EC" id="2.7.4.28" evidence="1"/>
<dbReference type="EMBL" id="CP000285">
    <property type="protein sequence ID" value="ABE59414.1"/>
    <property type="molecule type" value="Genomic_DNA"/>
</dbReference>
<dbReference type="RefSeq" id="WP_011507360.1">
    <property type="nucleotide sequence ID" value="NC_007963.1"/>
</dbReference>
<dbReference type="SMR" id="Q1QVU4"/>
<dbReference type="STRING" id="290398.Csal_2063"/>
<dbReference type="GeneID" id="95334778"/>
<dbReference type="KEGG" id="csa:Csal_2063"/>
<dbReference type="eggNOG" id="COG1806">
    <property type="taxonomic scope" value="Bacteria"/>
</dbReference>
<dbReference type="HOGENOM" id="CLU_046206_1_0_6"/>
<dbReference type="OrthoDB" id="9782201at2"/>
<dbReference type="Proteomes" id="UP000000239">
    <property type="component" value="Chromosome"/>
</dbReference>
<dbReference type="GO" id="GO:0043531">
    <property type="term" value="F:ADP binding"/>
    <property type="evidence" value="ECO:0007669"/>
    <property type="project" value="UniProtKB-UniRule"/>
</dbReference>
<dbReference type="GO" id="GO:0005524">
    <property type="term" value="F:ATP binding"/>
    <property type="evidence" value="ECO:0007669"/>
    <property type="project" value="InterPro"/>
</dbReference>
<dbReference type="GO" id="GO:0016776">
    <property type="term" value="F:phosphotransferase activity, phosphate group as acceptor"/>
    <property type="evidence" value="ECO:0007669"/>
    <property type="project" value="UniProtKB-UniRule"/>
</dbReference>
<dbReference type="GO" id="GO:0004674">
    <property type="term" value="F:protein serine/threonine kinase activity"/>
    <property type="evidence" value="ECO:0007669"/>
    <property type="project" value="UniProtKB-UniRule"/>
</dbReference>
<dbReference type="HAMAP" id="MF_01062">
    <property type="entry name" value="PSRP"/>
    <property type="match status" value="1"/>
</dbReference>
<dbReference type="InterPro" id="IPR005177">
    <property type="entry name" value="Kinase-pyrophosphorylase"/>
</dbReference>
<dbReference type="InterPro" id="IPR026530">
    <property type="entry name" value="PSRP"/>
</dbReference>
<dbReference type="NCBIfam" id="NF003742">
    <property type="entry name" value="PRK05339.1"/>
    <property type="match status" value="1"/>
</dbReference>
<dbReference type="PANTHER" id="PTHR31756">
    <property type="entry name" value="PYRUVATE, PHOSPHATE DIKINASE REGULATORY PROTEIN 1, CHLOROPLASTIC"/>
    <property type="match status" value="1"/>
</dbReference>
<dbReference type="PANTHER" id="PTHR31756:SF3">
    <property type="entry name" value="PYRUVATE, PHOSPHATE DIKINASE REGULATORY PROTEIN 1, CHLOROPLASTIC"/>
    <property type="match status" value="1"/>
</dbReference>
<dbReference type="Pfam" id="PF03618">
    <property type="entry name" value="Kinase-PPPase"/>
    <property type="match status" value="1"/>
</dbReference>
<feature type="chain" id="PRO_0000316658" description="Putative phosphoenolpyruvate synthase regulatory protein">
    <location>
        <begin position="1"/>
        <end position="277"/>
    </location>
</feature>
<feature type="binding site" evidence="1">
    <location>
        <begin position="152"/>
        <end position="159"/>
    </location>
    <ligand>
        <name>ADP</name>
        <dbReference type="ChEBI" id="CHEBI:456216"/>
    </ligand>
</feature>
<sequence length="277" mass="31205">MSRTAFFISDGTGITAETLGRSLLAQFEGVDLTLVVKPYIDTLEKAHDLAAIIAQTADRDGERPIVIDTIVDQSIRDIIAAAPGFKVDIFSTFLAPLEEELATHSTYTVGRTHAIGRDDVYMHRIDAVHFALDNDDGARTHQYDQADVILVGVSRCGKTPTSLYLALQFGIRAANYPLTEDDLDEDGVLNMPKALAPYRHKLFALTIDPRRLAAIRSERRPNSRYCSMDQCMQELQQAEALFRRYHIPYIDTTRFSIEEISTRMIAETHLTRRFSPR</sequence>
<evidence type="ECO:0000255" key="1">
    <source>
        <dbReference type="HAMAP-Rule" id="MF_01062"/>
    </source>
</evidence>
<accession>Q1QVU4</accession>
<gene>
    <name type="ordered locus">Csal_2063</name>
</gene>